<organism>
    <name type="scientific">Mycoplasma mobile (strain ATCC 43663 / 163K / NCTC 11711)</name>
    <name type="common">Mesomycoplasma mobile</name>
    <dbReference type="NCBI Taxonomy" id="267748"/>
    <lineage>
        <taxon>Bacteria</taxon>
        <taxon>Bacillati</taxon>
        <taxon>Mycoplasmatota</taxon>
        <taxon>Mycoplasmoidales</taxon>
        <taxon>Metamycoplasmataceae</taxon>
        <taxon>Mesomycoplasma</taxon>
    </lineage>
</organism>
<sequence length="182" mass="20752">MNELQVKFNEKVKQDIMKNFGYKSPMQIPRIKKIVINMTAGNEVSNTKAVEEVINELTLITGQTPYKTHAKKSLASFKIREGMPMGGKVTLRRDKMWDFLQKLIDIVIPRIRDFRGISPKSFDGRGNFALGIEEEIIFPEIDFDKIRRNKGLDVIIVTSANTDSEAKYLLEKLGMPFAKATN</sequence>
<dbReference type="EMBL" id="AE017308">
    <property type="protein sequence ID" value="AAT27733.1"/>
    <property type="molecule type" value="Genomic_DNA"/>
</dbReference>
<dbReference type="RefSeq" id="WP_011264767.1">
    <property type="nucleotide sequence ID" value="NC_006908.1"/>
</dbReference>
<dbReference type="SMR" id="Q6KI43"/>
<dbReference type="STRING" id="267748.MMOB2470"/>
<dbReference type="KEGG" id="mmo:MMOB2470"/>
<dbReference type="eggNOG" id="COG0094">
    <property type="taxonomic scope" value="Bacteria"/>
</dbReference>
<dbReference type="HOGENOM" id="CLU_061015_2_1_14"/>
<dbReference type="OrthoDB" id="9806626at2"/>
<dbReference type="Proteomes" id="UP000009072">
    <property type="component" value="Chromosome"/>
</dbReference>
<dbReference type="GO" id="GO:1990904">
    <property type="term" value="C:ribonucleoprotein complex"/>
    <property type="evidence" value="ECO:0007669"/>
    <property type="project" value="UniProtKB-KW"/>
</dbReference>
<dbReference type="GO" id="GO:0005840">
    <property type="term" value="C:ribosome"/>
    <property type="evidence" value="ECO:0007669"/>
    <property type="project" value="UniProtKB-KW"/>
</dbReference>
<dbReference type="GO" id="GO:0019843">
    <property type="term" value="F:rRNA binding"/>
    <property type="evidence" value="ECO:0007669"/>
    <property type="project" value="UniProtKB-UniRule"/>
</dbReference>
<dbReference type="GO" id="GO:0003735">
    <property type="term" value="F:structural constituent of ribosome"/>
    <property type="evidence" value="ECO:0007669"/>
    <property type="project" value="InterPro"/>
</dbReference>
<dbReference type="GO" id="GO:0000049">
    <property type="term" value="F:tRNA binding"/>
    <property type="evidence" value="ECO:0007669"/>
    <property type="project" value="UniProtKB-UniRule"/>
</dbReference>
<dbReference type="GO" id="GO:0006412">
    <property type="term" value="P:translation"/>
    <property type="evidence" value="ECO:0007669"/>
    <property type="project" value="UniProtKB-UniRule"/>
</dbReference>
<dbReference type="FunFam" id="3.30.1440.10:FF:000001">
    <property type="entry name" value="50S ribosomal protein L5"/>
    <property type="match status" value="1"/>
</dbReference>
<dbReference type="Gene3D" id="3.30.1440.10">
    <property type="match status" value="1"/>
</dbReference>
<dbReference type="HAMAP" id="MF_01333_B">
    <property type="entry name" value="Ribosomal_uL5_B"/>
    <property type="match status" value="1"/>
</dbReference>
<dbReference type="InterPro" id="IPR002132">
    <property type="entry name" value="Ribosomal_uL5"/>
</dbReference>
<dbReference type="InterPro" id="IPR020930">
    <property type="entry name" value="Ribosomal_uL5_bac-type"/>
</dbReference>
<dbReference type="InterPro" id="IPR031309">
    <property type="entry name" value="Ribosomal_uL5_C"/>
</dbReference>
<dbReference type="InterPro" id="IPR022803">
    <property type="entry name" value="Ribosomal_uL5_dom_sf"/>
</dbReference>
<dbReference type="InterPro" id="IPR031310">
    <property type="entry name" value="Ribosomal_uL5_N"/>
</dbReference>
<dbReference type="NCBIfam" id="NF000585">
    <property type="entry name" value="PRK00010.1"/>
    <property type="match status" value="1"/>
</dbReference>
<dbReference type="PANTHER" id="PTHR11994">
    <property type="entry name" value="60S RIBOSOMAL PROTEIN L11-RELATED"/>
    <property type="match status" value="1"/>
</dbReference>
<dbReference type="Pfam" id="PF00281">
    <property type="entry name" value="Ribosomal_L5"/>
    <property type="match status" value="1"/>
</dbReference>
<dbReference type="Pfam" id="PF00673">
    <property type="entry name" value="Ribosomal_L5_C"/>
    <property type="match status" value="1"/>
</dbReference>
<dbReference type="PIRSF" id="PIRSF002161">
    <property type="entry name" value="Ribosomal_L5"/>
    <property type="match status" value="1"/>
</dbReference>
<dbReference type="SUPFAM" id="SSF55282">
    <property type="entry name" value="RL5-like"/>
    <property type="match status" value="1"/>
</dbReference>
<protein>
    <recommendedName>
        <fullName evidence="1">Large ribosomal subunit protein uL5</fullName>
    </recommendedName>
    <alternativeName>
        <fullName evidence="2">50S ribosomal protein L5</fullName>
    </alternativeName>
</protein>
<name>RL5_MYCM1</name>
<keyword id="KW-1185">Reference proteome</keyword>
<keyword id="KW-0687">Ribonucleoprotein</keyword>
<keyword id="KW-0689">Ribosomal protein</keyword>
<keyword id="KW-0694">RNA-binding</keyword>
<keyword id="KW-0699">rRNA-binding</keyword>
<keyword id="KW-0820">tRNA-binding</keyword>
<proteinExistence type="inferred from homology"/>
<feature type="chain" id="PRO_0000243025" description="Large ribosomal subunit protein uL5">
    <location>
        <begin position="1"/>
        <end position="182"/>
    </location>
</feature>
<reference key="1">
    <citation type="journal article" date="2004" name="Genome Res.">
        <title>The complete genome and proteome of Mycoplasma mobile.</title>
        <authorList>
            <person name="Jaffe J.D."/>
            <person name="Stange-Thomann N."/>
            <person name="Smith C."/>
            <person name="DeCaprio D."/>
            <person name="Fisher S."/>
            <person name="Butler J."/>
            <person name="Calvo S."/>
            <person name="Elkins T."/>
            <person name="FitzGerald M.G."/>
            <person name="Hafez N."/>
            <person name="Kodira C.D."/>
            <person name="Major J."/>
            <person name="Wang S."/>
            <person name="Wilkinson J."/>
            <person name="Nicol R."/>
            <person name="Nusbaum C."/>
            <person name="Birren B."/>
            <person name="Berg H.C."/>
            <person name="Church G.M."/>
        </authorList>
    </citation>
    <scope>NUCLEOTIDE SEQUENCE [LARGE SCALE GENOMIC DNA]</scope>
    <source>
        <strain>ATCC 43663 / NCTC 11711 / 163 K</strain>
    </source>
</reference>
<evidence type="ECO:0000255" key="1">
    <source>
        <dbReference type="HAMAP-Rule" id="MF_01333"/>
    </source>
</evidence>
<evidence type="ECO:0000305" key="2"/>
<gene>
    <name evidence="1" type="primary">rplE</name>
    <name type="ordered locus">MMOB2470</name>
</gene>
<comment type="function">
    <text evidence="1">This is one of the proteins that bind and probably mediate the attachment of the 5S RNA into the large ribosomal subunit, where it forms part of the central protuberance. In the 70S ribosome it contacts protein S13 of the 30S subunit (bridge B1b), connecting the 2 subunits; this bridge is implicated in subunit movement. Contacts the P site tRNA; the 5S rRNA and some of its associated proteins might help stabilize positioning of ribosome-bound tRNAs.</text>
</comment>
<comment type="subunit">
    <text evidence="1">Part of the 50S ribosomal subunit; part of the 5S rRNA/L5/L18/L25 subcomplex. Contacts the 5S rRNA and the P site tRNA. Forms a bridge to the 30S subunit in the 70S ribosome.</text>
</comment>
<comment type="similarity">
    <text evidence="1">Belongs to the universal ribosomal protein uL5 family.</text>
</comment>
<accession>Q6KI43</accession>